<dbReference type="EMBL" id="M58553">
    <property type="protein sequence ID" value="AAA63553.1"/>
    <property type="molecule type" value="Genomic_DNA"/>
</dbReference>
<dbReference type="EMBL" id="X61305">
    <property type="protein sequence ID" value="CAA43602.1"/>
    <property type="molecule type" value="Genomic_DNA"/>
</dbReference>
<dbReference type="EMBL" id="CM003140">
    <property type="protein sequence ID" value="KIS72159.1"/>
    <property type="status" value="ALT_SEQ"/>
    <property type="molecule type" value="Genomic_DNA"/>
</dbReference>
<dbReference type="PIR" id="A32696">
    <property type="entry name" value="A32696"/>
</dbReference>
<dbReference type="PIR" id="A36671">
    <property type="entry name" value="A36671"/>
</dbReference>
<dbReference type="RefSeq" id="XP_011386823.1">
    <property type="nucleotide sequence ID" value="XM_011388521.1"/>
</dbReference>
<dbReference type="SMR" id="P22015"/>
<dbReference type="STRING" id="237631.P22015"/>
<dbReference type="EnsemblFungi" id="KIS72159">
    <property type="protein sequence ID" value="KIS72159"/>
    <property type="gene ID" value="UMAG_12052"/>
</dbReference>
<dbReference type="GeneID" id="23567838"/>
<dbReference type="KEGG" id="uma:UMAG_12052"/>
<dbReference type="eggNOG" id="ENOG502RSBJ">
    <property type="taxonomic scope" value="Eukaryota"/>
</dbReference>
<dbReference type="HOGENOM" id="CLU_671208_0_0_1"/>
<dbReference type="InParanoid" id="P22015"/>
<dbReference type="OMA" id="LWFINAR"/>
<dbReference type="OrthoDB" id="250329at2759"/>
<dbReference type="Proteomes" id="UP000000561">
    <property type="component" value="Chromosome 1"/>
</dbReference>
<dbReference type="GO" id="GO:0005634">
    <property type="term" value="C:nucleus"/>
    <property type="evidence" value="ECO:0007669"/>
    <property type="project" value="UniProtKB-SubCell"/>
</dbReference>
<dbReference type="GO" id="GO:0003677">
    <property type="term" value="F:DNA binding"/>
    <property type="evidence" value="ECO:0007669"/>
    <property type="project" value="UniProtKB-KW"/>
</dbReference>
<dbReference type="GO" id="GO:0006355">
    <property type="term" value="P:regulation of DNA-templated transcription"/>
    <property type="evidence" value="ECO:0007669"/>
    <property type="project" value="InterPro"/>
</dbReference>
<dbReference type="CDD" id="cd00086">
    <property type="entry name" value="homeodomain"/>
    <property type="match status" value="1"/>
</dbReference>
<dbReference type="Gene3D" id="1.10.10.60">
    <property type="entry name" value="Homeodomain-like"/>
    <property type="match status" value="1"/>
</dbReference>
<dbReference type="InterPro" id="IPR001356">
    <property type="entry name" value="HD"/>
</dbReference>
<dbReference type="InterPro" id="IPR009057">
    <property type="entry name" value="Homeodomain-like_sf"/>
</dbReference>
<dbReference type="InterPro" id="IPR008422">
    <property type="entry name" value="KN_HD"/>
</dbReference>
<dbReference type="InterPro" id="IPR008888">
    <property type="entry name" value="Ustilago_mating"/>
</dbReference>
<dbReference type="Pfam" id="PF05920">
    <property type="entry name" value="Homeobox_KN"/>
    <property type="match status" value="1"/>
</dbReference>
<dbReference type="Pfam" id="PF05722">
    <property type="entry name" value="Ustilago_mating"/>
    <property type="match status" value="1"/>
</dbReference>
<dbReference type="SUPFAM" id="SSF46689">
    <property type="entry name" value="Homeodomain-like"/>
    <property type="match status" value="1"/>
</dbReference>
<dbReference type="PROSITE" id="PS50071">
    <property type="entry name" value="HOMEOBOX_2"/>
    <property type="match status" value="1"/>
</dbReference>
<keyword id="KW-0238">DNA-binding</keyword>
<keyword id="KW-0371">Homeobox</keyword>
<keyword id="KW-0539">Nucleus</keyword>
<keyword id="KW-1185">Reference proteome</keyword>
<name>B1_MYCMD</name>
<proteinExistence type="inferred from homology"/>
<feature type="chain" id="PRO_0000049401" description="Mating-type locus allele B1 protein">
    <location>
        <begin position="1"/>
        <end position="410"/>
    </location>
</feature>
<feature type="DNA-binding region" description="Homeobox; TALE-type" evidence="2">
    <location>
        <begin position="107"/>
        <end position="184"/>
    </location>
</feature>
<feature type="region of interest" description="Variable domain between B alleles">
    <location>
        <begin position="1"/>
        <end position="110"/>
    </location>
</feature>
<feature type="region of interest" description="Highly conserved between B alleles">
    <location>
        <begin position="111"/>
        <end position="410"/>
    </location>
</feature>
<feature type="region of interest" description="Disordered" evidence="3">
    <location>
        <begin position="202"/>
        <end position="239"/>
    </location>
</feature>
<feature type="region of interest" description="Disordered" evidence="3">
    <location>
        <begin position="278"/>
        <end position="335"/>
    </location>
</feature>
<feature type="region of interest" description="Not essential for B1 function">
    <location>
        <begin position="333"/>
        <end position="410"/>
    </location>
</feature>
<feature type="region of interest" description="Disordered" evidence="3">
    <location>
        <begin position="374"/>
        <end position="395"/>
    </location>
</feature>
<feature type="short sequence motif" description="Nuclear localization signal" evidence="1">
    <location>
        <begin position="276"/>
        <end position="308"/>
    </location>
</feature>
<feature type="compositionally biased region" description="Low complexity" evidence="3">
    <location>
        <begin position="205"/>
        <end position="233"/>
    </location>
</feature>
<feature type="compositionally biased region" description="Basic residues" evidence="3">
    <location>
        <begin position="291"/>
        <end position="307"/>
    </location>
</feature>
<feature type="compositionally biased region" description="Polar residues" evidence="3">
    <location>
        <begin position="312"/>
        <end position="335"/>
    </location>
</feature>
<feature type="compositionally biased region" description="Basic residues" evidence="3">
    <location>
        <begin position="375"/>
        <end position="388"/>
    </location>
</feature>
<feature type="sequence conflict" description="In Ref. 1; AAA63553." evidence="4" ref="1">
    <original>QL</original>
    <variation>HV</variation>
    <location>
        <begin position="168"/>
        <end position="169"/>
    </location>
</feature>
<feature type="sequence conflict" description="In Ref. 1; AAA63553." evidence="4" ref="1">
    <original>S</original>
    <variation>Y</variation>
    <location>
        <position position="218"/>
    </location>
</feature>
<feature type="sequence conflict" description="In Ref. 1; AAA63553." evidence="4" ref="1">
    <original>K</original>
    <variation>N</variation>
    <location>
        <position position="292"/>
    </location>
</feature>
<reference key="1">
    <citation type="journal article" date="1990" name="Cell">
        <title>The b alleles of U. maydis, whose combinations program pathogenic development, code for polypeptides containing a homeodomain-related motif.</title>
        <authorList>
            <person name="Schulz B."/>
            <person name="Banuett F."/>
            <person name="Dahl M."/>
            <person name="Schlesinger R."/>
            <person name="Schaefer W."/>
            <person name="Martin T."/>
            <person name="Herskowitz I."/>
            <person name="Kahmann R."/>
        </authorList>
    </citation>
    <scope>NUCLEOTIDE SEQUENCE [GENOMIC DNA]</scope>
    <source>
        <strain>DSM 14603 / FGSC 9021 / UM521</strain>
    </source>
</reference>
<reference key="2">
    <citation type="journal article" date="1990" name="Genes Dev.">
        <title>The b mating-type locus of Ustilago maydis contains variable and constant regions.</title>
        <authorList>
            <person name="Kronstad J.W."/>
            <person name="Leong S.A."/>
        </authorList>
    </citation>
    <scope>NUCLEOTIDE SEQUENCE [GENOMIC DNA]</scope>
    <source>
        <strain>DSM 14603 / FGSC 9021 / UM521</strain>
    </source>
</reference>
<reference key="3">
    <citation type="journal article" date="2006" name="Nature">
        <title>Insights from the genome of the biotrophic fungal plant pathogen Ustilago maydis.</title>
        <authorList>
            <person name="Kaemper J."/>
            <person name="Kahmann R."/>
            <person name="Boelker M."/>
            <person name="Ma L.-J."/>
            <person name="Brefort T."/>
            <person name="Saville B.J."/>
            <person name="Banuett F."/>
            <person name="Kronstad J.W."/>
            <person name="Gold S.E."/>
            <person name="Mueller O."/>
            <person name="Perlin M.H."/>
            <person name="Woesten H.A.B."/>
            <person name="de Vries R."/>
            <person name="Ruiz-Herrera J."/>
            <person name="Reynaga-Pena C.G."/>
            <person name="Snetselaar K."/>
            <person name="McCann M."/>
            <person name="Perez-Martin J."/>
            <person name="Feldbruegge M."/>
            <person name="Basse C.W."/>
            <person name="Steinberg G."/>
            <person name="Ibeas J.I."/>
            <person name="Holloman W."/>
            <person name="Guzman P."/>
            <person name="Farman M.L."/>
            <person name="Stajich J.E."/>
            <person name="Sentandreu R."/>
            <person name="Gonzalez-Prieto J.M."/>
            <person name="Kennell J.C."/>
            <person name="Molina L."/>
            <person name="Schirawski J."/>
            <person name="Mendoza-Mendoza A."/>
            <person name="Greilinger D."/>
            <person name="Muench K."/>
            <person name="Roessel N."/>
            <person name="Scherer M."/>
            <person name="Vranes M."/>
            <person name="Ladendorf O."/>
            <person name="Vincon V."/>
            <person name="Fuchs U."/>
            <person name="Sandrock B."/>
            <person name="Meng S."/>
            <person name="Ho E.C.H."/>
            <person name="Cahill M.J."/>
            <person name="Boyce K.J."/>
            <person name="Klose J."/>
            <person name="Klosterman S.J."/>
            <person name="Deelstra H.J."/>
            <person name="Ortiz-Castellanos L."/>
            <person name="Li W."/>
            <person name="Sanchez-Alonso P."/>
            <person name="Schreier P.H."/>
            <person name="Haeuser-Hahn I."/>
            <person name="Vaupel M."/>
            <person name="Koopmann E."/>
            <person name="Friedrich G."/>
            <person name="Voss H."/>
            <person name="Schlueter T."/>
            <person name="Margolis J."/>
            <person name="Platt D."/>
            <person name="Swimmer C."/>
            <person name="Gnirke A."/>
            <person name="Chen F."/>
            <person name="Vysotskaia V."/>
            <person name="Mannhaupt G."/>
            <person name="Gueldener U."/>
            <person name="Muensterkoetter M."/>
            <person name="Haase D."/>
            <person name="Oesterheld M."/>
            <person name="Mewes H.-W."/>
            <person name="Mauceli E.W."/>
            <person name="DeCaprio D."/>
            <person name="Wade C.M."/>
            <person name="Butler J."/>
            <person name="Young S.K."/>
            <person name="Jaffe D.B."/>
            <person name="Calvo S.E."/>
            <person name="Nusbaum C."/>
            <person name="Galagan J.E."/>
            <person name="Birren B.W."/>
        </authorList>
    </citation>
    <scope>NUCLEOTIDE SEQUENCE [LARGE SCALE GENOMIC DNA]</scope>
    <source>
        <strain>DSM 14603 / FGSC 9021 / UM521</strain>
    </source>
</reference>
<reference key="4">
    <citation type="submission" date="2014-09" db="EMBL/GenBank/DDBJ databases">
        <authorList>
            <person name="Gueldener U."/>
            <person name="Muensterkoetter M."/>
            <person name="Walter M.C."/>
            <person name="Mannhaupt G."/>
            <person name="Kahmann R."/>
        </authorList>
    </citation>
    <scope>GENOME REANNOTATION</scope>
    <source>
        <strain>DSM 14603 / FGSC 9021 / UM521</strain>
    </source>
</reference>
<accession>P22015</accession>
<accession>A0A0D1E8M0</accession>
<accession>Q4PH36</accession>
<protein>
    <recommendedName>
        <fullName>Mating-type locus allele B1 protein</fullName>
    </recommendedName>
</protein>
<organism>
    <name type="scientific">Mycosarcoma maydis</name>
    <name type="common">Corn smut fungus</name>
    <name type="synonym">Ustilago maydis</name>
    <dbReference type="NCBI Taxonomy" id="5270"/>
    <lineage>
        <taxon>Eukaryota</taxon>
        <taxon>Fungi</taxon>
        <taxon>Dikarya</taxon>
        <taxon>Basidiomycota</taxon>
        <taxon>Ustilaginomycotina</taxon>
        <taxon>Ustilaginomycetes</taxon>
        <taxon>Ustilaginales</taxon>
        <taxon>Ustilaginaceae</taxon>
        <taxon>Mycosarcoma</taxon>
    </lineage>
</organism>
<sequence>MSSDPNFSLISFLECLNEIEHEFLRDKGENYPVLVRKLRELQQKIPNDIANLPRDPETIQQIHQTTHRIRAVAQAFIRFDQKFVSLCSEVVHGTSKVMQEFNVVSPDVGCRNLSEDLPAYHMRKHFLLTLDNPYPTQEEKETLVRLTNESTARVGQSSVNRPPLEVHQLTLWFINARRRSGWSHILKKFAREDRSRMKHLVRAKLSSSNQSTPPSSTSDSLSNNLDDVLSDNLGRPLTPVDKQQFEDDWASMISWIKYGVKEKVGDWVYDLCAASKKTPKPGMPRPVTTVAKRHPARKTKPAAKPKSRTANPRASTTPSIDSTLDSSKLESTPELSMCSTADTSFSTFGSSLSMSHYNPFQDGNDILQSPTVKARGNRKVKALPKRAGKQQPDEVDNGKIPFLCLSVAFV</sequence>
<gene>
    <name type="ORF">UMAG_12052</name>
</gene>
<comment type="function">
    <text>The B locus has at least 25 alleles, and any combination of two different B alleles yields a multimeric regulatory protein, that activates genes responsible for the pathogenicity and for the sexual development of the fungus within the corn plant.</text>
</comment>
<comment type="subcellular location">
    <subcellularLocation>
        <location>Nucleus</location>
    </subcellularLocation>
</comment>
<comment type="similarity">
    <text evidence="4">Belongs to the TALE/M-ATYP homeobox family.</text>
</comment>
<comment type="sequence caution" evidence="4">
    <conflict type="erroneous gene model prediction">
        <sequence resource="EMBL-CDS" id="KIS72159"/>
    </conflict>
</comment>
<evidence type="ECO:0000255" key="1"/>
<evidence type="ECO:0000255" key="2">
    <source>
        <dbReference type="PROSITE-ProRule" id="PRU00108"/>
    </source>
</evidence>
<evidence type="ECO:0000256" key="3">
    <source>
        <dbReference type="SAM" id="MobiDB-lite"/>
    </source>
</evidence>
<evidence type="ECO:0000305" key="4"/>